<keyword id="KW-0027">Amidation</keyword>
<keyword id="KW-0878">Amphibian defense peptide</keyword>
<keyword id="KW-0903">Direct protein sequencing</keyword>
<keyword id="KW-0873">Pyrrolidone carboxylic acid</keyword>
<keyword id="KW-0964">Secreted</keyword>
<organism>
    <name type="scientific">Litoria peronii</name>
    <name type="common">Emerald spotted tree frog</name>
    <name type="synonym">Hyla peronii</name>
    <dbReference type="NCBI Taxonomy" id="317363"/>
    <lineage>
        <taxon>Eukaryota</taxon>
        <taxon>Metazoa</taxon>
        <taxon>Chordata</taxon>
        <taxon>Craniata</taxon>
        <taxon>Vertebrata</taxon>
        <taxon>Euteleostomi</taxon>
        <taxon>Amphibia</taxon>
        <taxon>Batrachia</taxon>
        <taxon>Anura</taxon>
        <taxon>Neobatrachia</taxon>
        <taxon>Hyloidea</taxon>
        <taxon>Hylidae</taxon>
        <taxon>Pelodryadinae</taxon>
        <taxon>Litoria</taxon>
    </lineage>
</organism>
<evidence type="ECO:0000269" key="1">
    <source>
    </source>
</evidence>
<evidence type="ECO:0000305" key="2"/>
<name>PE11_LITPE</name>
<accession>P86487</accession>
<sequence length="7" mass="844">QPWLPFG</sequence>
<dbReference type="GO" id="GO:0005576">
    <property type="term" value="C:extracellular region"/>
    <property type="evidence" value="ECO:0000314"/>
    <property type="project" value="UniProtKB"/>
</dbReference>
<dbReference type="GO" id="GO:0006952">
    <property type="term" value="P:defense response"/>
    <property type="evidence" value="ECO:0007669"/>
    <property type="project" value="UniProtKB-KW"/>
</dbReference>
<dbReference type="GO" id="GO:0045987">
    <property type="term" value="P:positive regulation of smooth muscle contraction"/>
    <property type="evidence" value="ECO:0000314"/>
    <property type="project" value="UniProtKB"/>
</dbReference>
<comment type="function">
    <text evidence="1">Induces contraction of intestinal smooth muscle in isolated guinea pig ileum.</text>
</comment>
<comment type="subcellular location">
    <subcellularLocation>
        <location evidence="1">Secreted</location>
    </subcellularLocation>
</comment>
<comment type="tissue specificity">
    <text evidence="1">Expressed by the skin dorsal glands.</text>
</comment>
<comment type="mass spectrometry" mass="824.0" method="Electrospray" evidence="1"/>
<comment type="similarity">
    <text evidence="2">Belongs to the frog skin active peptide (FSAP) family. Peroniin subfamily.</text>
</comment>
<protein>
    <recommendedName>
        <fullName>Peroniin-1.1</fullName>
    </recommendedName>
</protein>
<feature type="peptide" id="PRO_0000394181" description="Peroniin-1.1">
    <location>
        <begin position="1"/>
        <end position="7"/>
    </location>
</feature>
<feature type="modified residue" description="Pyrrolidone carboxylic acid" evidence="1">
    <location>
        <position position="1"/>
    </location>
</feature>
<feature type="modified residue" description="Glycine amide" evidence="1">
    <location>
        <position position="7"/>
    </location>
</feature>
<proteinExistence type="evidence at protein level"/>
<reference evidence="2" key="1">
    <citation type="journal article" date="2009" name="Rapid Commun. Mass Spectrom.">
        <title>The host-defence skin peptide profiles of Peron's Tree Frog Litoria peronii in winter and summer. Sequence determination by electrospray mass spectrometry and activities of the peptides.</title>
        <authorList>
            <person name="Bilusich D."/>
            <person name="Jackway R.J."/>
            <person name="Musgrave I.F."/>
            <person name="Tyler M.J."/>
            <person name="Bowie J.H."/>
        </authorList>
    </citation>
    <scope>PROTEIN SEQUENCE</scope>
    <scope>FUNCTION</scope>
    <scope>SUBCELLULAR LOCATION</scope>
    <scope>TISSUE SPECIFICITY</scope>
    <scope>MASS SPECTROMETRY</scope>
    <scope>PYROGLUTAMATE FORMATION AT GLN-1</scope>
    <scope>AMIDATION AT GLY-7</scope>
    <source>
        <tissue evidence="1">Skin secretion</tissue>
    </source>
</reference>